<reference key="1">
    <citation type="journal article" date="2004" name="Nat. Genet.">
        <title>Comparison of genome degradation in Paratyphi A and Typhi, human-restricted serovars of Salmonella enterica that cause typhoid.</title>
        <authorList>
            <person name="McClelland M."/>
            <person name="Sanderson K.E."/>
            <person name="Clifton S.W."/>
            <person name="Latreille P."/>
            <person name="Porwollik S."/>
            <person name="Sabo A."/>
            <person name="Meyer R."/>
            <person name="Bieri T."/>
            <person name="Ozersky P."/>
            <person name="McLellan M."/>
            <person name="Harkins C.R."/>
            <person name="Wang C."/>
            <person name="Nguyen C."/>
            <person name="Berghoff A."/>
            <person name="Elliott G."/>
            <person name="Kohlberg S."/>
            <person name="Strong C."/>
            <person name="Du F."/>
            <person name="Carter J."/>
            <person name="Kremizki C."/>
            <person name="Layman D."/>
            <person name="Leonard S."/>
            <person name="Sun H."/>
            <person name="Fulton L."/>
            <person name="Nash W."/>
            <person name="Miner T."/>
            <person name="Minx P."/>
            <person name="Delehaunty K."/>
            <person name="Fronick C."/>
            <person name="Magrini V."/>
            <person name="Nhan M."/>
            <person name="Warren W."/>
            <person name="Florea L."/>
            <person name="Spieth J."/>
            <person name="Wilson R.K."/>
        </authorList>
    </citation>
    <scope>NUCLEOTIDE SEQUENCE [LARGE SCALE GENOMIC DNA]</scope>
    <source>
        <strain>ATCC 9150 / SARB42</strain>
    </source>
</reference>
<keyword id="KW-0067">ATP-binding</keyword>
<keyword id="KW-0119">Carbohydrate metabolism</keyword>
<keyword id="KW-0418">Kinase</keyword>
<keyword id="KW-0479">Metal-binding</keyword>
<keyword id="KW-0547">Nucleotide-binding</keyword>
<keyword id="KW-0808">Transferase</keyword>
<keyword id="KW-0862">Zinc</keyword>
<dbReference type="EC" id="2.7.1.59" evidence="1"/>
<dbReference type="EMBL" id="CP000026">
    <property type="protein sequence ID" value="AAV77557.1"/>
    <property type="molecule type" value="Genomic_DNA"/>
</dbReference>
<dbReference type="RefSeq" id="WP_000291319.1">
    <property type="nucleotide sequence ID" value="NC_006511.1"/>
</dbReference>
<dbReference type="SMR" id="Q5PGR8"/>
<dbReference type="KEGG" id="spt:SPA1630"/>
<dbReference type="HOGENOM" id="CLU_036604_0_3_6"/>
<dbReference type="UniPathway" id="UPA00544"/>
<dbReference type="Proteomes" id="UP000008185">
    <property type="component" value="Chromosome"/>
</dbReference>
<dbReference type="GO" id="GO:0005524">
    <property type="term" value="F:ATP binding"/>
    <property type="evidence" value="ECO:0007669"/>
    <property type="project" value="UniProtKB-UniRule"/>
</dbReference>
<dbReference type="GO" id="GO:0045127">
    <property type="term" value="F:N-acetylglucosamine kinase activity"/>
    <property type="evidence" value="ECO:0007669"/>
    <property type="project" value="UniProtKB-UniRule"/>
</dbReference>
<dbReference type="GO" id="GO:0008270">
    <property type="term" value="F:zinc ion binding"/>
    <property type="evidence" value="ECO:0007669"/>
    <property type="project" value="UniProtKB-UniRule"/>
</dbReference>
<dbReference type="GO" id="GO:0006044">
    <property type="term" value="P:N-acetylglucosamine metabolic process"/>
    <property type="evidence" value="ECO:0007669"/>
    <property type="project" value="UniProtKB-UniRule"/>
</dbReference>
<dbReference type="GO" id="GO:0009254">
    <property type="term" value="P:peptidoglycan turnover"/>
    <property type="evidence" value="ECO:0007669"/>
    <property type="project" value="UniProtKB-UniRule"/>
</dbReference>
<dbReference type="CDD" id="cd24057">
    <property type="entry name" value="ASKHA_NBD_ROK_NAGK"/>
    <property type="match status" value="1"/>
</dbReference>
<dbReference type="FunFam" id="3.30.420.40:FF:000049">
    <property type="entry name" value="N-acetyl-D-glucosamine kinase"/>
    <property type="match status" value="1"/>
</dbReference>
<dbReference type="FunFam" id="3.30.420.40:FF:000051">
    <property type="entry name" value="N-acetyl-D-glucosamine kinase"/>
    <property type="match status" value="1"/>
</dbReference>
<dbReference type="Gene3D" id="3.30.420.40">
    <property type="match status" value="2"/>
</dbReference>
<dbReference type="HAMAP" id="MF_01271">
    <property type="entry name" value="GlcNAc_kinase"/>
    <property type="match status" value="1"/>
</dbReference>
<dbReference type="InterPro" id="IPR043129">
    <property type="entry name" value="ATPase_NBD"/>
</dbReference>
<dbReference type="InterPro" id="IPR023505">
    <property type="entry name" value="N-acetyl-D-glucosamine_kinase"/>
</dbReference>
<dbReference type="InterPro" id="IPR000600">
    <property type="entry name" value="ROK"/>
</dbReference>
<dbReference type="InterPro" id="IPR049874">
    <property type="entry name" value="ROK_cs"/>
</dbReference>
<dbReference type="NCBIfam" id="NF009835">
    <property type="entry name" value="PRK13310.1"/>
    <property type="match status" value="1"/>
</dbReference>
<dbReference type="PANTHER" id="PTHR18964:SF162">
    <property type="entry name" value="N-ACETYL-D-GLUCOSAMINE KINASE"/>
    <property type="match status" value="1"/>
</dbReference>
<dbReference type="PANTHER" id="PTHR18964">
    <property type="entry name" value="ROK (REPRESSOR, ORF, KINASE) FAMILY"/>
    <property type="match status" value="1"/>
</dbReference>
<dbReference type="Pfam" id="PF00480">
    <property type="entry name" value="ROK"/>
    <property type="match status" value="1"/>
</dbReference>
<dbReference type="SUPFAM" id="SSF53067">
    <property type="entry name" value="Actin-like ATPase domain"/>
    <property type="match status" value="1"/>
</dbReference>
<dbReference type="PROSITE" id="PS01125">
    <property type="entry name" value="ROK"/>
    <property type="match status" value="1"/>
</dbReference>
<feature type="chain" id="PRO_0000270112" description="N-acetyl-D-glucosamine kinase">
    <location>
        <begin position="1"/>
        <end position="303"/>
    </location>
</feature>
<feature type="binding site" evidence="1">
    <location>
        <begin position="4"/>
        <end position="11"/>
    </location>
    <ligand>
        <name>ATP</name>
        <dbReference type="ChEBI" id="CHEBI:30616"/>
    </ligand>
</feature>
<feature type="binding site" evidence="1">
    <location>
        <begin position="133"/>
        <end position="140"/>
    </location>
    <ligand>
        <name>ATP</name>
        <dbReference type="ChEBI" id="CHEBI:30616"/>
    </ligand>
</feature>
<feature type="binding site" evidence="1">
    <location>
        <position position="157"/>
    </location>
    <ligand>
        <name>Zn(2+)</name>
        <dbReference type="ChEBI" id="CHEBI:29105"/>
    </ligand>
</feature>
<feature type="binding site" evidence="1">
    <location>
        <position position="177"/>
    </location>
    <ligand>
        <name>Zn(2+)</name>
        <dbReference type="ChEBI" id="CHEBI:29105"/>
    </ligand>
</feature>
<feature type="binding site" evidence="1">
    <location>
        <position position="179"/>
    </location>
    <ligand>
        <name>Zn(2+)</name>
        <dbReference type="ChEBI" id="CHEBI:29105"/>
    </ligand>
</feature>
<feature type="binding site" evidence="1">
    <location>
        <position position="184"/>
    </location>
    <ligand>
        <name>Zn(2+)</name>
        <dbReference type="ChEBI" id="CHEBI:29105"/>
    </ligand>
</feature>
<organism>
    <name type="scientific">Salmonella paratyphi A (strain ATCC 9150 / SARB42)</name>
    <dbReference type="NCBI Taxonomy" id="295319"/>
    <lineage>
        <taxon>Bacteria</taxon>
        <taxon>Pseudomonadati</taxon>
        <taxon>Pseudomonadota</taxon>
        <taxon>Gammaproteobacteria</taxon>
        <taxon>Enterobacterales</taxon>
        <taxon>Enterobacteriaceae</taxon>
        <taxon>Salmonella</taxon>
    </lineage>
</organism>
<comment type="function">
    <text evidence="1">Catalyzes the phosphorylation of N-acetyl-D-glucosamine (GlcNAc) derived from cell-wall degradation, yielding GlcNAc-6-P.</text>
</comment>
<comment type="catalytic activity">
    <reaction evidence="1">
        <text>N-acetyl-D-glucosamine + ATP = N-acetyl-D-glucosamine 6-phosphate + ADP + H(+)</text>
        <dbReference type="Rhea" id="RHEA:17417"/>
        <dbReference type="ChEBI" id="CHEBI:15378"/>
        <dbReference type="ChEBI" id="CHEBI:30616"/>
        <dbReference type="ChEBI" id="CHEBI:57513"/>
        <dbReference type="ChEBI" id="CHEBI:456216"/>
        <dbReference type="ChEBI" id="CHEBI:506227"/>
        <dbReference type="EC" id="2.7.1.59"/>
    </reaction>
</comment>
<comment type="pathway">
    <text evidence="1">Cell wall biogenesis; peptidoglycan recycling.</text>
</comment>
<comment type="similarity">
    <text evidence="1">Belongs to the ROK (NagC/XylR) family. NagK subfamily.</text>
</comment>
<accession>Q5PGR8</accession>
<sequence length="303" mass="32964">MYYGFDIGGTKIALGVFDSTRRLQWEKRVPTPHASYGAFLDAVCELVAEADQRFGVKGSVGIGIPGMPETEDGTLYAANVPAASGKPLRADLSARLDRDVRLDNDANCFALSEAWDDEFTQYPLVMGLILGTGVGGGLVLNGKPITGQSYITGEFGHMRLPVDALTLMGFDFPLRRCGCGQMGCIENYLSGRGFAWLYQHYYHQSLQAPEIIALWEQGDEQAHAHVERYLDLLAVCLGNILTIVDPDLLVIGGGLSNFTAITTQLAERLPRHLLPVARAPRIERARHGDAGGMRGAAFLHLTD</sequence>
<name>NAGK_SALPA</name>
<proteinExistence type="inferred from homology"/>
<gene>
    <name evidence="1" type="primary">nagK</name>
    <name type="ordered locus">SPA1630</name>
</gene>
<evidence type="ECO:0000255" key="1">
    <source>
        <dbReference type="HAMAP-Rule" id="MF_01271"/>
    </source>
</evidence>
<protein>
    <recommendedName>
        <fullName evidence="1">N-acetyl-D-glucosamine kinase</fullName>
        <ecNumber evidence="1">2.7.1.59</ecNumber>
    </recommendedName>
    <alternativeName>
        <fullName evidence="1">GlcNAc kinase</fullName>
    </alternativeName>
</protein>